<name>AHK3_ARATH</name>
<gene>
    <name type="primary">AHK3</name>
    <name type="synonym">ORE12</name>
    <name type="ordered locus">At1g27320</name>
    <name type="ORF">F17L21.11</name>
</gene>
<proteinExistence type="evidence at protein level"/>
<protein>
    <recommendedName>
        <fullName>Histidine kinase 3</fullName>
        <ecNumber>2.7.13.3</ecNumber>
    </recommendedName>
    <alternativeName>
        <fullName>Arabidopsis histidine kinase 3</fullName>
        <shortName>AtHK3</shortName>
    </alternativeName>
    <alternativeName>
        <fullName>Protein AUTHENTIC HIS-KINASE 3</fullName>
    </alternativeName>
    <alternativeName>
        <fullName>Protein ORESARA 12</fullName>
    </alternativeName>
</protein>
<sequence length="1036" mass="116373">MSLFHVLGFGVKIGHLFWMLCCWFVSWFVDNGIEDKSGLLVGSVGDLEKTKMTTLKKKNKMWFWNKISSSGLKIPSFSYQFLGSVKFNKAWWRKLVVVWVVFWVLVSIWTFWYFSSQAMEKRKETLASMCDERARMLQDQFNVSMNHVQAMSILISTFHHGKIPSAIDQRTFSEYTDRTSFERPLTSGVAYAMRVLHSEREEFERQQGWTIRKMYSLEQNPVHKDDYDLEALEPSPVQEEYAPVIFAQDTVSHVVSLDMLSGKEDRENVLRARSSGKGVLTAPFPLIKTNRLGVILTFAVYKRDLPSNATPKERIEATNGYLGGVFDIESLVENLLQQLASKQTILVNVYDITNHSQPISMYGTNVSADGLERVSPLIFGDPLRKHEMRCRFKQKPPWPVLSMVTSFGILVIALLVAHIIHATVSRIHKVEEDCDKMKQLKKKAEAADVAKSQFLATVSHEIRTPMNGVLGMLHMLMDTELDVTQQDYVRTAQASGKALVSLINEVLDQAKIESGKLELEEVRFDLRGILDDVLSLFSSKSQQKGVELAVYISDRVPDMLIGDPGRFRQILTNLMGNSIKFTEKGHIFVTVHLVDELFESIDGETASSPESTLSGLPVADRQRSWENFKAFSSNGHRSFEPSPPDINLIVSVEDTGVGIPVEAQSRIFTPFMQVGPSISRTHGGTGIGLSISKCLVGLMKGEIGFSSTPKVGSTFTFTAVFSNGMQPAERKNDNNQPIFSEFRGMKAVVVDHRPARAKVSWYHFQRLGIRVEVVPRVEQALHYLKIGTTTVNMILIEQEIWNREADDFIKKLQKDPLFLSPKLILLANSVESSISEALCTGIDPPIVIVKPLRASMLAATLQRGLGIGIREPPQHKGPPALILRNLLLGRKILIVDDNNVNLRVAAGALKKYGADVVCAESGIKAISLLKPPHEFDACFMDIQMPEMDGFEATRRIRDMEEEMNKRIKNGEALIVENGNKTSWHLPVLAMTADVIQATHEECLKCGMDGYVSKPFEAEQLYREVSRFFNSPSDTES</sequence>
<dbReference type="EC" id="2.7.13.3"/>
<dbReference type="EMBL" id="AB046870">
    <property type="protein sequence ID" value="BAB40775.1"/>
    <property type="molecule type" value="mRNA"/>
</dbReference>
<dbReference type="EMBL" id="AC004557">
    <property type="protein sequence ID" value="AAF99730.1"/>
    <property type="status" value="ALT_SEQ"/>
    <property type="molecule type" value="Genomic_DNA"/>
</dbReference>
<dbReference type="EMBL" id="CP002684">
    <property type="protein sequence ID" value="AEE30806.1"/>
    <property type="molecule type" value="Genomic_DNA"/>
</dbReference>
<dbReference type="RefSeq" id="NP_564276.1">
    <property type="nucleotide sequence ID" value="NM_102494.4"/>
</dbReference>
<dbReference type="SMR" id="Q9C5U1"/>
<dbReference type="BioGRID" id="24856">
    <property type="interactions" value="7"/>
</dbReference>
<dbReference type="FunCoup" id="Q9C5U1">
    <property type="interactions" value="710"/>
</dbReference>
<dbReference type="IntAct" id="Q9C5U1">
    <property type="interactions" value="8"/>
</dbReference>
<dbReference type="STRING" id="3702.Q9C5U1"/>
<dbReference type="BindingDB" id="Q9C5U1"/>
<dbReference type="ChEMBL" id="CHEMBL6125"/>
<dbReference type="PaxDb" id="3702-AT1G27320.1"/>
<dbReference type="ProteomicsDB" id="244661"/>
<dbReference type="EnsemblPlants" id="AT1G27320.1">
    <property type="protein sequence ID" value="AT1G27320.1"/>
    <property type="gene ID" value="AT1G27320"/>
</dbReference>
<dbReference type="GeneID" id="839621"/>
<dbReference type="Gramene" id="AT1G27320.1">
    <property type="protein sequence ID" value="AT1G27320.1"/>
    <property type="gene ID" value="AT1G27320"/>
</dbReference>
<dbReference type="KEGG" id="ath:AT1G27320"/>
<dbReference type="Araport" id="AT1G27320"/>
<dbReference type="TAIR" id="AT1G27320">
    <property type="gene designation" value="HK3"/>
</dbReference>
<dbReference type="eggNOG" id="KOG0519">
    <property type="taxonomic scope" value="Eukaryota"/>
</dbReference>
<dbReference type="HOGENOM" id="CLU_000445_16_2_1"/>
<dbReference type="InParanoid" id="Q9C5U1"/>
<dbReference type="OMA" id="TWWKRLL"/>
<dbReference type="PhylomeDB" id="Q9C5U1"/>
<dbReference type="PRO" id="PR:Q9C5U1"/>
<dbReference type="Proteomes" id="UP000006548">
    <property type="component" value="Chromosome 1"/>
</dbReference>
<dbReference type="ExpressionAtlas" id="Q9C5U1">
    <property type="expression patterns" value="baseline and differential"/>
</dbReference>
<dbReference type="GO" id="GO:0005789">
    <property type="term" value="C:endoplasmic reticulum membrane"/>
    <property type="evidence" value="ECO:0007669"/>
    <property type="project" value="UniProtKB-SubCell"/>
</dbReference>
<dbReference type="GO" id="GO:0005634">
    <property type="term" value="C:nucleus"/>
    <property type="evidence" value="ECO:0007005"/>
    <property type="project" value="TAIR"/>
</dbReference>
<dbReference type="GO" id="GO:0005886">
    <property type="term" value="C:plasma membrane"/>
    <property type="evidence" value="ECO:0000314"/>
    <property type="project" value="TAIR"/>
</dbReference>
<dbReference type="GO" id="GO:0009884">
    <property type="term" value="F:cytokinin receptor activity"/>
    <property type="evidence" value="ECO:0000304"/>
    <property type="project" value="TAIR"/>
</dbReference>
<dbReference type="GO" id="GO:0000155">
    <property type="term" value="F:phosphorelay sensor kinase activity"/>
    <property type="evidence" value="ECO:0007669"/>
    <property type="project" value="InterPro"/>
</dbReference>
<dbReference type="GO" id="GO:0004673">
    <property type="term" value="F:protein histidine kinase activity"/>
    <property type="evidence" value="ECO:0000314"/>
    <property type="project" value="UniProtKB"/>
</dbReference>
<dbReference type="GO" id="GO:0043424">
    <property type="term" value="F:protein histidine kinase binding"/>
    <property type="evidence" value="ECO:0000353"/>
    <property type="project" value="UniProtKB"/>
</dbReference>
<dbReference type="GO" id="GO:0071215">
    <property type="term" value="P:cellular response to abscisic acid stimulus"/>
    <property type="evidence" value="ECO:0000315"/>
    <property type="project" value="UniProtKB"/>
</dbReference>
<dbReference type="GO" id="GO:0070417">
    <property type="term" value="P:cellular response to cold"/>
    <property type="evidence" value="ECO:0000315"/>
    <property type="project" value="UniProtKB"/>
</dbReference>
<dbReference type="GO" id="GO:0016036">
    <property type="term" value="P:cellular response to phosphate starvation"/>
    <property type="evidence" value="ECO:0000315"/>
    <property type="project" value="UniProtKB"/>
</dbReference>
<dbReference type="GO" id="GO:0071329">
    <property type="term" value="P:cellular response to sucrose stimulus"/>
    <property type="evidence" value="ECO:0000315"/>
    <property type="project" value="UniProtKB"/>
</dbReference>
<dbReference type="GO" id="GO:0009736">
    <property type="term" value="P:cytokinin-activated signaling pathway"/>
    <property type="evidence" value="ECO:0000304"/>
    <property type="project" value="TAIR"/>
</dbReference>
<dbReference type="GO" id="GO:0042742">
    <property type="term" value="P:defense response to bacterium"/>
    <property type="evidence" value="ECO:0000314"/>
    <property type="project" value="TAIR"/>
</dbReference>
<dbReference type="GO" id="GO:0010150">
    <property type="term" value="P:leaf senescence"/>
    <property type="evidence" value="ECO:0000315"/>
    <property type="project" value="TAIR"/>
</dbReference>
<dbReference type="GO" id="GO:0034757">
    <property type="term" value="P:negative regulation of iron ion transport"/>
    <property type="evidence" value="ECO:0000315"/>
    <property type="project" value="UniProtKB"/>
</dbReference>
<dbReference type="GO" id="GO:0010087">
    <property type="term" value="P:phloem or xylem histogenesis"/>
    <property type="evidence" value="ECO:0000315"/>
    <property type="project" value="UniProtKB"/>
</dbReference>
<dbReference type="GO" id="GO:0010271">
    <property type="term" value="P:regulation of chlorophyll catabolic process"/>
    <property type="evidence" value="ECO:0000315"/>
    <property type="project" value="TAIR"/>
</dbReference>
<dbReference type="GO" id="GO:0009909">
    <property type="term" value="P:regulation of flower development"/>
    <property type="evidence" value="ECO:0000315"/>
    <property type="project" value="UniProtKB"/>
</dbReference>
<dbReference type="GO" id="GO:0048509">
    <property type="term" value="P:regulation of meristem development"/>
    <property type="evidence" value="ECO:0000315"/>
    <property type="project" value="UniProtKB"/>
</dbReference>
<dbReference type="GO" id="GO:0010029">
    <property type="term" value="P:regulation of seed germination"/>
    <property type="evidence" value="ECO:0000315"/>
    <property type="project" value="TAIR"/>
</dbReference>
<dbReference type="GO" id="GO:0048831">
    <property type="term" value="P:regulation of shoot system development"/>
    <property type="evidence" value="ECO:0000315"/>
    <property type="project" value="TAIR"/>
</dbReference>
<dbReference type="GO" id="GO:0009409">
    <property type="term" value="P:response to cold"/>
    <property type="evidence" value="ECO:0000270"/>
    <property type="project" value="TAIR"/>
</dbReference>
<dbReference type="GO" id="GO:0006970">
    <property type="term" value="P:response to osmotic stress"/>
    <property type="evidence" value="ECO:0000315"/>
    <property type="project" value="TAIR"/>
</dbReference>
<dbReference type="GO" id="GO:0009651">
    <property type="term" value="P:response to salt stress"/>
    <property type="evidence" value="ECO:0000270"/>
    <property type="project" value="TAIR"/>
</dbReference>
<dbReference type="GO" id="GO:0009414">
    <property type="term" value="P:response to water deprivation"/>
    <property type="evidence" value="ECO:0000270"/>
    <property type="project" value="TAIR"/>
</dbReference>
<dbReference type="GO" id="GO:0080117">
    <property type="term" value="P:secondary growth"/>
    <property type="evidence" value="ECO:0000315"/>
    <property type="project" value="UniProtKB"/>
</dbReference>
<dbReference type="CDD" id="cd16922">
    <property type="entry name" value="HATPase_EvgS-ArcB-TorS-like"/>
    <property type="match status" value="1"/>
</dbReference>
<dbReference type="CDD" id="cd00082">
    <property type="entry name" value="HisKA"/>
    <property type="match status" value="1"/>
</dbReference>
<dbReference type="CDD" id="cd06223">
    <property type="entry name" value="PRTases_typeI"/>
    <property type="match status" value="1"/>
</dbReference>
<dbReference type="CDD" id="cd17546">
    <property type="entry name" value="REC_hyHK_CKI1_RcsC-like"/>
    <property type="match status" value="1"/>
</dbReference>
<dbReference type="FunFam" id="3.40.50.2300:FF:000137">
    <property type="entry name" value="Histidine kinase 3"/>
    <property type="match status" value="1"/>
</dbReference>
<dbReference type="FunFam" id="1.10.287.130:FF:000015">
    <property type="entry name" value="Histidine kinase 4"/>
    <property type="match status" value="1"/>
</dbReference>
<dbReference type="FunFam" id="3.30.450.350:FF:000001">
    <property type="entry name" value="Histidine kinase 4"/>
    <property type="match status" value="1"/>
</dbReference>
<dbReference type="Gene3D" id="1.10.287.130">
    <property type="match status" value="1"/>
</dbReference>
<dbReference type="Gene3D" id="3.40.50.2300">
    <property type="match status" value="2"/>
</dbReference>
<dbReference type="Gene3D" id="6.10.250.1190">
    <property type="match status" value="1"/>
</dbReference>
<dbReference type="Gene3D" id="3.30.450.350">
    <property type="entry name" value="CHASE domain"/>
    <property type="match status" value="1"/>
</dbReference>
<dbReference type="Gene3D" id="3.30.565.10">
    <property type="entry name" value="Histidine kinase-like ATPase, C-terminal domain"/>
    <property type="match status" value="1"/>
</dbReference>
<dbReference type="InterPro" id="IPR050956">
    <property type="entry name" value="2C_system_His_kinase"/>
</dbReference>
<dbReference type="InterPro" id="IPR006189">
    <property type="entry name" value="CHASE_dom"/>
</dbReference>
<dbReference type="InterPro" id="IPR042240">
    <property type="entry name" value="CHASE_sf"/>
</dbReference>
<dbReference type="InterPro" id="IPR011006">
    <property type="entry name" value="CheY-like_superfamily"/>
</dbReference>
<dbReference type="InterPro" id="IPR036890">
    <property type="entry name" value="HATPase_C_sf"/>
</dbReference>
<dbReference type="InterPro" id="IPR005467">
    <property type="entry name" value="His_kinase_dom"/>
</dbReference>
<dbReference type="InterPro" id="IPR003661">
    <property type="entry name" value="HisK_dim/P_dom"/>
</dbReference>
<dbReference type="InterPro" id="IPR036097">
    <property type="entry name" value="HisK_dim/P_sf"/>
</dbReference>
<dbReference type="InterPro" id="IPR000836">
    <property type="entry name" value="PRibTrfase_dom"/>
</dbReference>
<dbReference type="InterPro" id="IPR056839">
    <property type="entry name" value="Receiver_AHK4/CRE1_1st"/>
</dbReference>
<dbReference type="InterPro" id="IPR004358">
    <property type="entry name" value="Sig_transdc_His_kin-like_C"/>
</dbReference>
<dbReference type="InterPro" id="IPR001789">
    <property type="entry name" value="Sig_transdc_resp-reg_receiver"/>
</dbReference>
<dbReference type="PANTHER" id="PTHR43719:SF73">
    <property type="entry name" value="HISTIDINE KINASE 3"/>
    <property type="match status" value="1"/>
</dbReference>
<dbReference type="PANTHER" id="PTHR43719">
    <property type="entry name" value="TWO-COMPONENT HISTIDINE KINASE"/>
    <property type="match status" value="1"/>
</dbReference>
<dbReference type="Pfam" id="PF03924">
    <property type="entry name" value="CHASE"/>
    <property type="match status" value="1"/>
</dbReference>
<dbReference type="Pfam" id="PF02518">
    <property type="entry name" value="HATPase_c"/>
    <property type="match status" value="1"/>
</dbReference>
<dbReference type="Pfam" id="PF00512">
    <property type="entry name" value="HisKA"/>
    <property type="match status" value="1"/>
</dbReference>
<dbReference type="Pfam" id="PF24896">
    <property type="entry name" value="Receiver_CRE1"/>
    <property type="match status" value="1"/>
</dbReference>
<dbReference type="Pfam" id="PF00072">
    <property type="entry name" value="Response_reg"/>
    <property type="match status" value="1"/>
</dbReference>
<dbReference type="PRINTS" id="PR00344">
    <property type="entry name" value="BCTRLSENSOR"/>
</dbReference>
<dbReference type="SMART" id="SM01079">
    <property type="entry name" value="CHASE"/>
    <property type="match status" value="1"/>
</dbReference>
<dbReference type="SMART" id="SM00387">
    <property type="entry name" value="HATPase_c"/>
    <property type="match status" value="1"/>
</dbReference>
<dbReference type="SMART" id="SM00388">
    <property type="entry name" value="HisKA"/>
    <property type="match status" value="1"/>
</dbReference>
<dbReference type="SMART" id="SM00448">
    <property type="entry name" value="REC"/>
    <property type="match status" value="2"/>
</dbReference>
<dbReference type="SUPFAM" id="SSF55874">
    <property type="entry name" value="ATPase domain of HSP90 chaperone/DNA topoisomerase II/histidine kinase"/>
    <property type="match status" value="1"/>
</dbReference>
<dbReference type="SUPFAM" id="SSF52172">
    <property type="entry name" value="CheY-like"/>
    <property type="match status" value="2"/>
</dbReference>
<dbReference type="SUPFAM" id="SSF47384">
    <property type="entry name" value="Homodimeric domain of signal transducing histidine kinase"/>
    <property type="match status" value="1"/>
</dbReference>
<dbReference type="PROSITE" id="PS50839">
    <property type="entry name" value="CHASE"/>
    <property type="match status" value="1"/>
</dbReference>
<dbReference type="PROSITE" id="PS50109">
    <property type="entry name" value="HIS_KIN"/>
    <property type="match status" value="1"/>
</dbReference>
<dbReference type="PROSITE" id="PS50110">
    <property type="entry name" value="RESPONSE_REGULATORY"/>
    <property type="match status" value="2"/>
</dbReference>
<accession>Q9C5U1</accession>
<accession>Q9FZK3</accession>
<keyword id="KW-1003">Cell membrane</keyword>
<keyword id="KW-0932">Cytokinin signaling pathway</keyword>
<keyword id="KW-0217">Developmental protein</keyword>
<keyword id="KW-0256">Endoplasmic reticulum</keyword>
<keyword id="KW-0418">Kinase</keyword>
<keyword id="KW-0472">Membrane</keyword>
<keyword id="KW-0597">Phosphoprotein</keyword>
<keyword id="KW-1185">Reference proteome</keyword>
<keyword id="KW-0677">Repeat</keyword>
<keyword id="KW-0808">Transferase</keyword>
<keyword id="KW-0812">Transmembrane</keyword>
<keyword id="KW-1133">Transmembrane helix</keyword>
<comment type="function">
    <text evidence="6 7 8 9 10 11 12 13 14 16 17 18 19 20 21 24 25 26 28">Cytokinins (CK) receptor related to bacterial two-component regulators. Functions as a histidine kinase and transmits the stress signal to a downstream MAPK cascade. This protein undergoes an ATP-dependent autophosphorylation at a conserved histidine residue in the kinase core, and a phosphoryl group is then transferred to a conserved aspartate residue in the receiver domain. In the presence of cytokinin, feeds phosphate to phosphorelay-integrating histidine phosphotransfer protein (HPt) and activates subsequent cascade. Involved in meristems establishment in seedlings. Redundant negative regulator of drought and salt stress responses and abscisic acid (ABA) signaling. Together with AHK2, plays a negative regulatory role in cold stress signaling via inhibition of ABA response, occurring independently of the cold acclimation pathway. Redundant positive regulator of cytokinin signaling that regulates many developmental processes including seed germination, cell division, seed size, chlorophyll retention during leaf senescence, root repression and shoot promotion. Can interact with isoprenoid-type cytokinins trans-zeatin (tZ and tZR), cis-zeatin (cZ), dihydrozeatin (DZ), buta-2,3-dienyladenine (HA-8), penta-2,3-dienyladenine (HA-1), 4-methyl-penta-2,3-dienyladenine (HA-10), 4-hydroxy-2-butynyladenine (RM1), 2-propynyladenine (RM3), 2-butynyladenine (RM6), and cytokinin ribosides and ribotides. Together with AHK4, involved in the cytokinin-dependent responses to Pi starvation and sucrose stresses. Promotes cytokinin-mediated leaf longevity through a specific phosphorylation of the response regulator ARR2. Involved in alkamides (e.g. N-isobutyl decanamide) and N-acylethanolamides (NAE) signaling that control meristematic activity and differentiation processes during plant development. Contributes to vascular bundle formation and secondary growth in a cytokinin-dependent manner, probably by promoting the maintenance of mitotic activity and/or identity of procambial cells. Plays a role in the cytokinin-mediated repression of the iron uptake pathway. Required by the cytokinin-dependent flower development regulation pathway.</text>
</comment>
<comment type="catalytic activity">
    <reaction>
        <text>ATP + protein L-histidine = ADP + protein N-phospho-L-histidine.</text>
        <dbReference type="EC" id="2.7.13.3"/>
    </reaction>
</comment>
<comment type="activity regulation">
    <text evidence="23 27">Activated by cytokinins to initiate phosphorelay signaling. This cytokinin-mediated activation is repressed by the trans-zeatin antagonists 6-(2-hydroxy-3-methylbenzylamino)purine (PI-55) and 6-(2,5-Dihydroxybenzylamino)purine (LGR-991).</text>
</comment>
<comment type="biophysicochemical properties">
    <phDependence>
        <text evidence="16">Optimum pH to bind cytokinin is about 8.5 at 0 degrees Celsius.</text>
    </phDependence>
    <temperatureDependence>
        <text evidence="16">Cytokinin-binding is stable at 0 degrees Celsius but transient at 37 degrees Celsius.</text>
    </temperatureDependence>
</comment>
<comment type="subunit">
    <text evidence="15 22">Interacts with AHK2, AHK4, AHP1, AHP2, AHP3, AHP5 and At5g43560.</text>
</comment>
<comment type="interaction">
    <interactant intactId="EBI-1100653">
        <id>Q9C5U1</id>
    </interactant>
    <interactant intactId="EBI-1100634">
        <id>Q9C5U2</id>
        <label>AHK2</label>
    </interactant>
    <organismsDiffer>false</organismsDiffer>
    <experiments>2</experiments>
</comment>
<comment type="interaction">
    <interactant intactId="EBI-1100653">
        <id>Q9C5U1</id>
    </interactant>
    <interactant intactId="EBI-1100775">
        <id>Q9C5U0</id>
        <label>AHK4</label>
    </interactant>
    <organismsDiffer>false</organismsDiffer>
    <experiments>2</experiments>
</comment>
<comment type="interaction">
    <interactant intactId="EBI-1100653">
        <id>Q9C5U1</id>
    </interactant>
    <interactant intactId="EBI-1100673">
        <id>Q9ZNV9</id>
        <label>AHP1</label>
    </interactant>
    <organismsDiffer>false</organismsDiffer>
    <experiments>2</experiments>
</comment>
<comment type="interaction">
    <interactant intactId="EBI-1100653">
        <id>Q9C5U1</id>
    </interactant>
    <interactant intactId="EBI-1100687">
        <id>Q9ZNV8</id>
        <label>AHP2</label>
    </interactant>
    <organismsDiffer>false</organismsDiffer>
    <experiments>2</experiments>
</comment>
<comment type="interaction">
    <interactant intactId="EBI-1100653">
        <id>Q9C5U1</id>
    </interactant>
    <interactant intactId="EBI-1100711">
        <id>Q9SAZ5</id>
        <label>AHP3</label>
    </interactant>
    <organismsDiffer>false</organismsDiffer>
    <experiments>2</experiments>
</comment>
<comment type="interaction">
    <interactant intactId="EBI-1100653">
        <id>Q9C5U1</id>
    </interactant>
    <interactant intactId="EBI-1100725">
        <id>Q67XQ1</id>
        <label>At1g03430</label>
    </interactant>
    <organismsDiffer>false</organismsDiffer>
    <experiments>3</experiments>
</comment>
<comment type="subcellular location">
    <subcellularLocation>
        <location>Cell membrane</location>
        <topology>Multi-pass membrane protein</topology>
    </subcellularLocation>
    <subcellularLocation>
        <location>Endoplasmic reticulum membrane</location>
        <topology>Multi-pass membrane protein</topology>
    </subcellularLocation>
    <text evidence="13">The plasma membrane localization is supported by the over-expression of an AHK3-GFP fusion protein.</text>
</comment>
<comment type="tissue specificity">
    <text evidence="6 8 9">Mostly expressed in leaves and flowers, and, to a lower extent, in roots, stems, and siliques, especially in the vascular tissues. Present in seedlings.</text>
</comment>
<comment type="developmental stage">
    <text evidence="8 14">In seedlings, mainly localized in meristematic tissues (e.g. shoot apical meristem SAM, root tips, and growing leaf and lateral root primordia). Present in all the vasculature and the shoot apical meristem (SAM) of the adult plant. In the root tips, strongest expression in the procambium.</text>
</comment>
<comment type="induction">
    <text evidence="19">Rapidly induced by dehydration, high salinity and cold stresses.</text>
</comment>
<comment type="PTM">
    <text evidence="1">Autophosphorylated predominantly on His residues. Activation probably requires a transfer of a phosphate group between a His in the transmitter domain and an Asp of the receiver domain (By similarity).</text>
</comment>
<comment type="disruption phenotype">
    <text evidence="8 9 12 14 18 19 20 24 25 26 28">Hypersensitivity to ABA, and strong drought and salinity tolerance. Reduced sensitivity to cytokinin (mostly in roots). More rapid germination, reduced requirement for light, and decreased far-red light sensitivity. Early senescence promoted by darkness. Reduced sensitivity to N-isobutyl decanamide. Defects in procambium proliferation and absence of secondary growth. Enhanced freezing tolerance. Impaired benzyladenine (6-BA)-mediated repression of the iron uptake pathway. Disturbed cytokinin-mediated flower development abnormality. Impaired meristematic development in seedlings.</text>
</comment>
<comment type="miscellaneous">
    <text>'Oresara' means 'long living' in Korean.</text>
</comment>
<comment type="sequence caution" evidence="29">
    <conflict type="erroneous gene model prediction">
        <sequence resource="EMBL-CDS" id="AAF99730"/>
    </conflict>
</comment>
<organism>
    <name type="scientific">Arabidopsis thaliana</name>
    <name type="common">Mouse-ear cress</name>
    <dbReference type="NCBI Taxonomy" id="3702"/>
    <lineage>
        <taxon>Eukaryota</taxon>
        <taxon>Viridiplantae</taxon>
        <taxon>Streptophyta</taxon>
        <taxon>Embryophyta</taxon>
        <taxon>Tracheophyta</taxon>
        <taxon>Spermatophyta</taxon>
        <taxon>Magnoliopsida</taxon>
        <taxon>eudicotyledons</taxon>
        <taxon>Gunneridae</taxon>
        <taxon>Pentapetalae</taxon>
        <taxon>rosids</taxon>
        <taxon>malvids</taxon>
        <taxon>Brassicales</taxon>
        <taxon>Brassicaceae</taxon>
        <taxon>Camelineae</taxon>
        <taxon>Arabidopsis</taxon>
    </lineage>
</organism>
<reference key="1">
    <citation type="journal article" date="2001" name="Plant Cell Physiol.">
        <title>Novel family of sensor histidine kinase genes in Arabidopsis thaliana.</title>
        <authorList>
            <person name="Ueguchi C."/>
            <person name="Koizumi H."/>
            <person name="Suzuki T."/>
            <person name="Mizuno T."/>
        </authorList>
    </citation>
    <scope>NUCLEOTIDE SEQUENCE [MRNA]</scope>
    <scope>FUNCTION</scope>
    <scope>TISSUE SPECIFICITY</scope>
</reference>
<reference key="2">
    <citation type="journal article" date="2000" name="Nature">
        <title>Sequence and analysis of chromosome 1 of the plant Arabidopsis thaliana.</title>
        <authorList>
            <person name="Theologis A."/>
            <person name="Ecker J.R."/>
            <person name="Palm C.J."/>
            <person name="Federspiel N.A."/>
            <person name="Kaul S."/>
            <person name="White O."/>
            <person name="Alonso J."/>
            <person name="Altafi H."/>
            <person name="Araujo R."/>
            <person name="Bowman C.L."/>
            <person name="Brooks S.Y."/>
            <person name="Buehler E."/>
            <person name="Chan A."/>
            <person name="Chao Q."/>
            <person name="Chen H."/>
            <person name="Cheuk R.F."/>
            <person name="Chin C.W."/>
            <person name="Chung M.K."/>
            <person name="Conn L."/>
            <person name="Conway A.B."/>
            <person name="Conway A.R."/>
            <person name="Creasy T.H."/>
            <person name="Dewar K."/>
            <person name="Dunn P."/>
            <person name="Etgu P."/>
            <person name="Feldblyum T.V."/>
            <person name="Feng J.-D."/>
            <person name="Fong B."/>
            <person name="Fujii C.Y."/>
            <person name="Gill J.E."/>
            <person name="Goldsmith A.D."/>
            <person name="Haas B."/>
            <person name="Hansen N.F."/>
            <person name="Hughes B."/>
            <person name="Huizar L."/>
            <person name="Hunter J.L."/>
            <person name="Jenkins J."/>
            <person name="Johnson-Hopson C."/>
            <person name="Khan S."/>
            <person name="Khaykin E."/>
            <person name="Kim C.J."/>
            <person name="Koo H.L."/>
            <person name="Kremenetskaia I."/>
            <person name="Kurtz D.B."/>
            <person name="Kwan A."/>
            <person name="Lam B."/>
            <person name="Langin-Hooper S."/>
            <person name="Lee A."/>
            <person name="Lee J.M."/>
            <person name="Lenz C.A."/>
            <person name="Li J.H."/>
            <person name="Li Y.-P."/>
            <person name="Lin X."/>
            <person name="Liu S.X."/>
            <person name="Liu Z.A."/>
            <person name="Luros J.S."/>
            <person name="Maiti R."/>
            <person name="Marziali A."/>
            <person name="Militscher J."/>
            <person name="Miranda M."/>
            <person name="Nguyen M."/>
            <person name="Nierman W.C."/>
            <person name="Osborne B.I."/>
            <person name="Pai G."/>
            <person name="Peterson J."/>
            <person name="Pham P.K."/>
            <person name="Rizzo M."/>
            <person name="Rooney T."/>
            <person name="Rowley D."/>
            <person name="Sakano H."/>
            <person name="Salzberg S.L."/>
            <person name="Schwartz J.R."/>
            <person name="Shinn P."/>
            <person name="Southwick A.M."/>
            <person name="Sun H."/>
            <person name="Tallon L.J."/>
            <person name="Tambunga G."/>
            <person name="Toriumi M.J."/>
            <person name="Town C.D."/>
            <person name="Utterback T."/>
            <person name="Van Aken S."/>
            <person name="Vaysberg M."/>
            <person name="Vysotskaia V.S."/>
            <person name="Walker M."/>
            <person name="Wu D."/>
            <person name="Yu G."/>
            <person name="Fraser C.M."/>
            <person name="Venter J.C."/>
            <person name="Davis R.W."/>
        </authorList>
    </citation>
    <scope>NUCLEOTIDE SEQUENCE [LARGE SCALE GENOMIC DNA]</scope>
    <source>
        <strain>cv. Columbia</strain>
    </source>
</reference>
<reference key="3">
    <citation type="journal article" date="2017" name="Plant J.">
        <title>Araport11: a complete reannotation of the Arabidopsis thaliana reference genome.</title>
        <authorList>
            <person name="Cheng C.Y."/>
            <person name="Krishnakumar V."/>
            <person name="Chan A.P."/>
            <person name="Thibaud-Nissen F."/>
            <person name="Schobel S."/>
            <person name="Town C.D."/>
        </authorList>
    </citation>
    <scope>GENOME REANNOTATION</scope>
    <source>
        <strain>cv. Columbia</strain>
    </source>
</reference>
<reference key="4">
    <citation type="journal article" date="2001" name="Plant Cell Physiol.">
        <title>The Arabidopsis AHK4 histidine kinase is a cytokinin-binding receptor that transduces cytokinin signals across the membrane.</title>
        <authorList>
            <person name="Yamada H."/>
            <person name="Suzuki T."/>
            <person name="Terada K."/>
            <person name="Takei K."/>
            <person name="Ishikawa K."/>
            <person name="Miwa K."/>
            <person name="Yamashino T."/>
            <person name="Mizuno T."/>
        </authorList>
    </citation>
    <scope>FUNCTION</scope>
    <scope>ACTIVATION BY CYTOKININS</scope>
</reference>
<reference key="5">
    <citation type="journal article" date="2002" name="Genes Genet. Syst.">
        <title>His-Asp phosphorelay signal transduction in higher plants: receptors and response regulators for cytokinin signaling in Arabidopsis thaliana.</title>
        <authorList>
            <person name="Oka A."/>
            <person name="Sakai H."/>
            <person name="Iwakoshi S."/>
        </authorList>
    </citation>
    <scope>REVIEW</scope>
</reference>
<reference key="6">
    <citation type="journal article" date="2002" name="Plant Physiol.">
        <title>Two-component signal transduction pathways in Arabidopsis.</title>
        <authorList>
            <person name="Hwang I."/>
            <person name="Chen H.-C."/>
            <person name="Sheen J."/>
        </authorList>
    </citation>
    <scope>GENE FAMILY</scope>
    <scope>NOMENCLATURE</scope>
</reference>
<reference key="7">
    <citation type="journal article" date="2004" name="Plant Cell">
        <title>Histidine kinase homologs that act as cytokinin receptors possess overlapping functions in the regulation of shoot and root growth in Arabidopsis.</title>
        <authorList>
            <person name="Nishimura C."/>
            <person name="Ohashi Y."/>
            <person name="Sato S."/>
            <person name="Kato T."/>
            <person name="Tabata S."/>
            <person name="Ueguchi C."/>
        </authorList>
    </citation>
    <scope>FUNCTION</scope>
    <scope>DISRUPTION PHENOTYPE</scope>
    <scope>TISSUE SPECIFICITY</scope>
    <scope>DEVELOPMENTAL STAGE</scope>
</reference>
<reference key="8">
    <citation type="journal article" date="2004" name="Plant Cell Physiol.">
        <title>Two cytokinin receptors of Arabidopsis thaliana, CRE1/AHK4 and AHK3, differ in their ligand specificity in a bacterial assay.</title>
        <authorList>
            <person name="Spichal L."/>
            <person name="Rakova N.Y."/>
            <person name="Riefler M."/>
            <person name="Mizuno T."/>
            <person name="Romanov G.A."/>
            <person name="Strnad M."/>
            <person name="Schmuelling T."/>
        </authorList>
    </citation>
    <scope>FUNCTION</scope>
</reference>
<reference key="9">
    <citation type="journal article" date="2004" name="Proc. Natl. Acad. Sci. U.S.A.">
        <title>In planta functions of the Arabidopsis cytokinin receptor family.</title>
        <authorList>
            <person name="Higuchi M."/>
            <person name="Pischke M.S."/>
            <person name="Maehoenen A.P."/>
            <person name="Miyawaki K."/>
            <person name="Hashimoto Y."/>
            <person name="Seki M."/>
            <person name="Kobayashi M."/>
            <person name="Shinozaki K."/>
            <person name="Kato T."/>
            <person name="Tabata S."/>
            <person name="Helariutta Y."/>
            <person name="Sussman M.R."/>
            <person name="Kakimoto T."/>
        </authorList>
    </citation>
    <scope>FUNCTION</scope>
    <scope>TISSUE SPECIFICITY</scope>
    <scope>DISRUPTION PHENOTYPE</scope>
</reference>
<reference key="10">
    <citation type="journal article" date="2005" name="Plant Physiol.">
        <title>Interaction between phosphate-starvation, sugar, and cytokinin signaling in Arabidopsis and the roles of cytokinin receptors CRE1/AHK4 and AHK3.</title>
        <authorList>
            <person name="Franco-Zorrilla J.M."/>
            <person name="Martin A.C."/>
            <person name="Leyva A."/>
            <person name="Paz-Ares J."/>
        </authorList>
    </citation>
    <scope>FUNCTION</scope>
    <scope>MUTAGENESIS OF SER-713</scope>
</reference>
<reference key="11">
    <citation type="journal article" date="2006" name="Curr. Biol.">
        <title>Cytokinins regulate a bidirectional phosphorelay network in Arabidopsis.</title>
        <authorList>
            <person name="Maehoenen A.P."/>
            <person name="Higuchi M."/>
            <person name="Toermaekangas K."/>
            <person name="Miyawaki K."/>
            <person name="Pischke M.S."/>
            <person name="Sussman M.R."/>
            <person name="Helariutta Y."/>
            <person name="Kakimoto T."/>
        </authorList>
    </citation>
    <scope>FUNCTION</scope>
    <scope>DISRUPTION PHENOTYPE</scope>
    <scope>DEVELOPMENTAL STAGE</scope>
</reference>
<reference key="12">
    <citation type="journal article" date="2006" name="FEBS J.">
        <title>Analysis of protein interactions within the cytokinin-signaling pathway of Arabidopsis thaliana.</title>
        <authorList>
            <person name="Dortay H."/>
            <person name="Mehnert N."/>
            <person name="Buerkle L."/>
            <person name="Schmuelling T."/>
            <person name="Heyl A."/>
        </authorList>
    </citation>
    <scope>INTERACTION WITH AHP1; AHP2; AHP3; AHP5; AHK2 AND AHK4</scope>
</reference>
<reference key="13">
    <citation type="journal article" date="2006" name="J. Exp. Bot.">
        <title>Biochemical characteristics and ligand-binding properties of Arabidopsis cytokinin receptor AHK3 compared to CRE1/AHK4 as revealed by a direct binding assay.</title>
        <authorList>
            <person name="Romanov G.A."/>
            <person name="Lomin S.N."/>
            <person name="Schmuelling T."/>
        </authorList>
    </citation>
    <scope>FUNCTION</scope>
    <scope>BIOPHYSICOCHEMICAL PROPERTIES</scope>
</reference>
<reference key="14">
    <citation type="journal article" date="2006" name="Plant Cell">
        <title>Arabidopsis cytokinin receptor mutants reveal functions in shoot growth, leaf senescence, seed size, germination, root development, and cytokinin metabolism.</title>
        <authorList>
            <person name="Riefler M."/>
            <person name="Novak O."/>
            <person name="Strnad M."/>
            <person name="Schmuelling T."/>
        </authorList>
    </citation>
    <scope>FUNCTION</scope>
    <scope>DISRUPTION PHENOTYPE</scope>
</reference>
<reference key="15">
    <citation type="journal article" date="2006" name="Proc. Natl. Acad. Sci. U.S.A.">
        <title>Cytokinin-mediated control of leaf longevity by AHK3 through phosphorylation of ARR2 in Arabidopsis.</title>
        <authorList>
            <person name="Kim H.J."/>
            <person name="Ryu H."/>
            <person name="Hong S.H."/>
            <person name="Woo H.R."/>
            <person name="Lim P.O."/>
            <person name="Lee I.C."/>
            <person name="Sheen J."/>
            <person name="Nam H.G."/>
            <person name="Hwang I."/>
        </authorList>
    </citation>
    <scope>FUNCTION</scope>
    <scope>MUTAGENESIS OF PRO-243 AND ASP-448</scope>
    <scope>SUBCELLULAR LOCATION</scope>
</reference>
<reference key="16">
    <citation type="journal article" date="2007" name="Plant Cell Physiol.">
        <title>Identification of amino acid substitutions that render the Arabidopsis cytokinin receptor histidine kinase AHK4 constitutively active.</title>
        <authorList>
            <person name="Miwa K."/>
            <person name="Ishikawa K."/>
            <person name="Terada K."/>
            <person name="Yamada H."/>
            <person name="Suzuki T."/>
            <person name="Yamashino T."/>
            <person name="Mizuno T."/>
        </authorList>
    </citation>
    <scope>FUNCTION</scope>
    <scope>MUTAGENESIS OF THR-281 AND VAL-449</scope>
</reference>
<reference key="17">
    <citation type="journal article" date="2007" name="Proc. Natl. Acad. Sci. U.S.A.">
        <title>Functional analysis of AHK1/ATHK1 and cytokinin receptor histidine kinases in response to abscisic acid, drought, and salt stress in Arabidopsis.</title>
        <authorList>
            <person name="Tran L.S."/>
            <person name="Urao T."/>
            <person name="Qin F."/>
            <person name="Maruyama K."/>
            <person name="Kakimoto T."/>
            <person name="Shinozaki K."/>
            <person name="Yamaguchi-Shinozaki K."/>
        </authorList>
    </citation>
    <scope>FUNCTION</scope>
    <scope>INDUCTION</scope>
    <scope>DISRUPTION PHENOTYPE</scope>
</reference>
<reference key="18">
    <citation type="journal article" date="2007" name="Plant Physiol.">
        <title>Cytokinin receptors are involved in alkamide regulation of root and shoot development in Arabidopsis.</title>
        <authorList>
            <person name="Lopez-Bucio J."/>
            <person name="Millan-Godinez M."/>
            <person name="Mendez-Bravo A."/>
            <person name="Morquecho-Contreras A."/>
            <person name="Ramirez-Chavez E."/>
            <person name="Molina-Torres J."/>
            <person name="Perez-Torres A."/>
            <person name="Higuchi M."/>
            <person name="Kakimoto T."/>
            <person name="Herrera-Estrella L."/>
        </authorList>
    </citation>
    <scope>FUNCTION</scope>
    <scope>DISRUPTION PHENOTYPE</scope>
</reference>
<reference key="19">
    <citation type="journal article" date="2008" name="J. Mol. Biol.">
        <title>Mechanism-based inhibitors of cytokinin oxidase/dehydrogenase attack FAD cofactor.</title>
        <authorList>
            <person name="Kopecny D."/>
            <person name="Sebela M."/>
            <person name="Briozzo P."/>
            <person name="Spichal L."/>
            <person name="Houba-Herin N."/>
            <person name="Masek V."/>
            <person name="Joly N."/>
            <person name="Madzak C."/>
            <person name="Anzenbacher P."/>
            <person name="Laloue M."/>
        </authorList>
    </citation>
    <scope>FUNCTION</scope>
</reference>
<reference key="20">
    <citation type="journal article" date="2008" name="J. Proteome Res.">
        <title>Toward an interaction map of the two-component signaling pathway of Arabidopsis thaliana.</title>
        <authorList>
            <person name="Dortay H."/>
            <person name="Gruhn N."/>
            <person name="Pfeifer A."/>
            <person name="Schwerdtner M."/>
            <person name="Schmuelling T."/>
            <person name="Heyl A."/>
        </authorList>
    </citation>
    <scope>INTERACTION WITH AT5G43560</scope>
</reference>
<reference key="21">
    <citation type="journal article" date="2008" name="Plant J.">
        <title>Cytokinins negatively regulate the root iron uptake machinery in Arabidopsis through a growth-dependent pathway.</title>
        <authorList>
            <person name="Seguela M."/>
            <person name="Briat J.-F."/>
            <person name="Vert G."/>
            <person name="Curie C."/>
        </authorList>
    </citation>
    <scope>FUNCTION</scope>
    <scope>DISRUPTION PHENOTYPE</scope>
</reference>
<reference key="22">
    <citation type="journal article" date="2009" name="FEBS J.">
        <title>The purine derivative PI-55 blocks cytokinin action via receptor inhibition.</title>
        <authorList>
            <person name="Spichal L."/>
            <person name="Werner T."/>
            <person name="Popa I."/>
            <person name="Riefler M."/>
            <person name="Schmuelling T."/>
            <person name="Strnad M."/>
        </authorList>
    </citation>
    <scope>ACTIVITY REGULATION</scope>
</reference>
<reference key="23">
    <citation type="journal article" date="2009" name="Plant Cell">
        <title>The histidine kinases CYTOKININ-INDEPENDENT1 and ARABIDOPSIS HISTIDINE KINASE2 and 3 regulate vascular tissue development in Arabidopsis shoots.</title>
        <authorList>
            <person name="Hejatko J."/>
            <person name="Ryu H."/>
            <person name="Kim G.-T."/>
            <person name="Dobesova R."/>
            <person name="Choi S."/>
            <person name="Choi S.M."/>
            <person name="Soucek P."/>
            <person name="Horak J."/>
            <person name="Pekarova B."/>
            <person name="Palme K."/>
            <person name="Brzobohaty B."/>
            <person name="Hwang I."/>
        </authorList>
    </citation>
    <scope>FUNCTION</scope>
    <scope>DISRUPTION PHENOTYPE</scope>
</reference>
<reference key="24">
    <citation type="journal article" date="2010" name="Development">
        <title>STIMPY mediates cytokinin signaling during shoot meristem establishment in Arabidopsis seedlings.</title>
        <authorList>
            <person name="Skylar A."/>
            <person name="Hong F."/>
            <person name="Chory J."/>
            <person name="Weigel D."/>
            <person name="Wu X."/>
        </authorList>
    </citation>
    <scope>FUNCTION</scope>
    <scope>DISRUPTION PHENOTYPE</scope>
</reference>
<reference key="25">
    <citation type="journal article" date="2010" name="Gene">
        <title>Cytokinin overproduction-caused alteration of flower development is partially mediated by CUC2 and CUC3 in Arabidopsis.</title>
        <authorList>
            <person name="Li X.G."/>
            <person name="Su Y.H."/>
            <person name="Zhao X.Y."/>
            <person name="Li W."/>
            <person name="Gao X.Q."/>
            <person name="Zhang X.S."/>
        </authorList>
    </citation>
    <scope>FUNCTION</scope>
    <scope>DISRUPTION PHENOTYPE</scope>
</reference>
<reference key="26">
    <citation type="journal article" date="2010" name="J. Biol. Chem.">
        <title>A subset of cytokinin two-component signaling system plays a role in cold temperature stress response in Arabidopsis.</title>
        <authorList>
            <person name="Jeon J."/>
            <person name="Kim N.Y."/>
            <person name="Kim S."/>
            <person name="Kang N.Y."/>
            <person name="Novak O."/>
            <person name="Ku S.-J."/>
            <person name="Cho C."/>
            <person name="Lee D.J."/>
            <person name="Lee E.-J."/>
            <person name="Strnad M."/>
            <person name="Kim J."/>
        </authorList>
    </citation>
    <scope>FUNCTION</scope>
    <scope>DISRUPTION PHENOTYPE</scope>
</reference>
<reference key="27">
    <citation type="journal article" date="2010" name="Phytochemistry">
        <title>Cytokinin receptor antagonists derived from 6-benzylaminopurine.</title>
        <authorList>
            <person name="Nisler J."/>
            <person name="Zatloukal M."/>
            <person name="Popa I."/>
            <person name="Dolezal K."/>
            <person name="Strnad M."/>
            <person name="Spichal L."/>
        </authorList>
    </citation>
    <scope>ACTIVITY REGULATION</scope>
</reference>
<reference key="28">
    <citation type="journal article" date="2011" name="Plant Physiol.">
        <title>The cytokinin receptors of Arabidopsis are located mainly to the endoplasmic reticulum.</title>
        <authorList>
            <person name="Wulfetange K."/>
            <person name="Lomin S.N."/>
            <person name="Romanov G.A."/>
            <person name="Stolz A."/>
            <person name="Heyl A."/>
            <person name="Schmuelling T."/>
        </authorList>
    </citation>
    <scope>SUBCELLULAR LOCATION</scope>
    <source>
        <strain>cv. Columbia</strain>
    </source>
</reference>
<evidence type="ECO:0000250" key="1"/>
<evidence type="ECO:0000255" key="2"/>
<evidence type="ECO:0000255" key="3">
    <source>
        <dbReference type="PROSITE-ProRule" id="PRU00049"/>
    </source>
</evidence>
<evidence type="ECO:0000255" key="4">
    <source>
        <dbReference type="PROSITE-ProRule" id="PRU00107"/>
    </source>
</evidence>
<evidence type="ECO:0000255" key="5">
    <source>
        <dbReference type="PROSITE-ProRule" id="PRU00169"/>
    </source>
</evidence>
<evidence type="ECO:0000269" key="6">
    <source>
    </source>
</evidence>
<evidence type="ECO:0000269" key="7">
    <source>
    </source>
</evidence>
<evidence type="ECO:0000269" key="8">
    <source>
    </source>
</evidence>
<evidence type="ECO:0000269" key="9">
    <source>
    </source>
</evidence>
<evidence type="ECO:0000269" key="10">
    <source>
    </source>
</evidence>
<evidence type="ECO:0000269" key="11">
    <source>
    </source>
</evidence>
<evidence type="ECO:0000269" key="12">
    <source>
    </source>
</evidence>
<evidence type="ECO:0000269" key="13">
    <source>
    </source>
</evidence>
<evidence type="ECO:0000269" key="14">
    <source>
    </source>
</evidence>
<evidence type="ECO:0000269" key="15">
    <source>
    </source>
</evidence>
<evidence type="ECO:0000269" key="16">
    <source>
    </source>
</evidence>
<evidence type="ECO:0000269" key="17">
    <source>
    </source>
</evidence>
<evidence type="ECO:0000269" key="18">
    <source>
    </source>
</evidence>
<evidence type="ECO:0000269" key="19">
    <source>
    </source>
</evidence>
<evidence type="ECO:0000269" key="20">
    <source>
    </source>
</evidence>
<evidence type="ECO:0000269" key="21">
    <source>
    </source>
</evidence>
<evidence type="ECO:0000269" key="22">
    <source>
    </source>
</evidence>
<evidence type="ECO:0000269" key="23">
    <source>
    </source>
</evidence>
<evidence type="ECO:0000269" key="24">
    <source>
    </source>
</evidence>
<evidence type="ECO:0000269" key="25">
    <source>
    </source>
</evidence>
<evidence type="ECO:0000269" key="26">
    <source>
    </source>
</evidence>
<evidence type="ECO:0000269" key="27">
    <source>
    </source>
</evidence>
<evidence type="ECO:0000269" key="28">
    <source>
    </source>
</evidence>
<evidence type="ECO:0000305" key="29"/>
<feature type="chain" id="PRO_0000398588" description="Histidine kinase 3">
    <location>
        <begin position="1"/>
        <end position="1036"/>
    </location>
</feature>
<feature type="topological domain" description="Extracellular" evidence="2">
    <location>
        <begin position="1"/>
        <end position="8"/>
    </location>
</feature>
<feature type="transmembrane region" description="Helical" evidence="2">
    <location>
        <begin position="9"/>
        <end position="29"/>
    </location>
</feature>
<feature type="topological domain" description="Cytoplasmic" evidence="2">
    <location>
        <begin position="30"/>
        <end position="94"/>
    </location>
</feature>
<feature type="transmembrane region" description="Helical" evidence="2">
    <location>
        <begin position="95"/>
        <end position="115"/>
    </location>
</feature>
<feature type="topological domain" description="Extracellular" evidence="2">
    <location>
        <begin position="116"/>
        <end position="399"/>
    </location>
</feature>
<feature type="transmembrane region" description="Helical" evidence="2">
    <location>
        <begin position="400"/>
        <end position="420"/>
    </location>
</feature>
<feature type="topological domain" description="Cytoplasmic" evidence="2">
    <location>
        <begin position="421"/>
        <end position="1036"/>
    </location>
</feature>
<feature type="domain" description="CHASE" evidence="3">
    <location>
        <begin position="163"/>
        <end position="389"/>
    </location>
</feature>
<feature type="domain" description="Histidine kinase" evidence="4">
    <location>
        <begin position="457"/>
        <end position="723"/>
    </location>
</feature>
<feature type="domain" description="Response regulatory 1" evidence="5">
    <location>
        <begin position="746"/>
        <end position="865"/>
    </location>
</feature>
<feature type="domain" description="Response regulatory 2" evidence="5">
    <location>
        <begin position="891"/>
        <end position="1028"/>
    </location>
</feature>
<feature type="modified residue" description="Phosphohistidine; by autocatalysis" evidence="4">
    <location>
        <position position="460"/>
    </location>
</feature>
<feature type="modified residue" description="4-aspartylphosphate" evidence="5">
    <location>
        <position position="941"/>
    </location>
</feature>
<feature type="mutagenesis site" description="In ore12-1; delayed leaf senescence and abolished cytokinin-dependent phosphorylation activity toward ARR2." evidence="13">
    <original>P</original>
    <variation>S</variation>
    <location>
        <position position="243"/>
    </location>
</feature>
<feature type="mutagenesis site" description="Loss of cytokinin-mediated activation." evidence="17">
    <original>T</original>
    <variation>I</variation>
    <location>
        <position position="281"/>
    </location>
</feature>
<feature type="mutagenesis site" description="Delayed leaf senescence." evidence="13">
    <original>D</original>
    <variation>N</variation>
    <location>
        <position position="448"/>
    </location>
</feature>
<feature type="mutagenesis site" description="Constitutively activated independently of cytokinin." evidence="17">
    <original>V</original>
    <variation>A</variation>
    <location>
        <position position="449"/>
    </location>
</feature>
<feature type="mutagenesis site" description="In ahk3-4; reduced sensitivity to cytokinin (mostly in roots), and impaired cytokinin repression of several Pi starvation-responsive genes and increased sucrose sensitivity." evidence="11">
    <original>S</original>
    <variation>F</variation>
    <location>
        <position position="713"/>
    </location>
</feature>